<proteinExistence type="evidence at protein level"/>
<sequence length="326" mass="36896">MRLFILAVLTVGVLGSNDDLWHQWKRMYNKEYNGADDQHRRNIWEKNVKHIQEHNLRHDLGLVTYTLGLNQFTDMTFEEFKAKYLTEMSRASDILSHGVPYEANNRAVPDKIDWRESGYVTEVKDQGNCGSCWAFSTTGTMEGQYMKNERTSISFSEQQLVDCSGPWGNNGCSGGLMENAYQYLKQFGLETESSYPYTAVEGQCRYNKQLGVAKVTGYYTVHSGSEVELKNLVGARRPAAVAVDVESDFMMYRSGIYQSQTCSPLRVNHAVLAVGYGTQGGTDYWIVKNSWGTYWGERGYIRMARNRGNMCGIASLASLPMVARFP</sequence>
<organism>
    <name type="scientific">Fasciola hepatica</name>
    <name type="common">Liver fluke</name>
    <dbReference type="NCBI Taxonomy" id="6192"/>
    <lineage>
        <taxon>Eukaryota</taxon>
        <taxon>Metazoa</taxon>
        <taxon>Spiralia</taxon>
        <taxon>Lophotrochozoa</taxon>
        <taxon>Platyhelminthes</taxon>
        <taxon>Trematoda</taxon>
        <taxon>Digenea</taxon>
        <taxon>Plagiorchiida</taxon>
        <taxon>Echinostomata</taxon>
        <taxon>Echinostomatoidea</taxon>
        <taxon>Fasciolidae</taxon>
        <taxon>Fasciola</taxon>
    </lineage>
</organism>
<dbReference type="EC" id="3.4.22.-"/>
<dbReference type="EMBL" id="L33771">
    <property type="protein sequence ID" value="AAA29136.1"/>
    <property type="molecule type" value="mRNA"/>
</dbReference>
<dbReference type="PIR" id="S43991">
    <property type="entry name" value="S43991"/>
</dbReference>
<dbReference type="PDB" id="2O6X">
    <property type="method" value="X-ray"/>
    <property type="resolution" value="1.40 A"/>
    <property type="chains" value="A=17-326"/>
</dbReference>
<dbReference type="PDBsum" id="2O6X"/>
<dbReference type="SMR" id="Q24940"/>
<dbReference type="DrugBank" id="DB12245">
    <property type="generic name" value="Triclabendazole"/>
</dbReference>
<dbReference type="MEROPS" id="C01.033"/>
<dbReference type="BRENDA" id="3.4.22.B49">
    <property type="organism ID" value="2230"/>
</dbReference>
<dbReference type="BRENDA" id="3.4.22.B60">
    <property type="organism ID" value="2230"/>
</dbReference>
<dbReference type="EvolutionaryTrace" id="Q24940"/>
<dbReference type="GO" id="GO:0005576">
    <property type="term" value="C:extracellular region"/>
    <property type="evidence" value="ECO:0000314"/>
    <property type="project" value="UniProtKB"/>
</dbReference>
<dbReference type="GO" id="GO:0004197">
    <property type="term" value="F:cysteine-type endopeptidase activity"/>
    <property type="evidence" value="ECO:0000314"/>
    <property type="project" value="UniProtKB"/>
</dbReference>
<dbReference type="GO" id="GO:0004175">
    <property type="term" value="F:endopeptidase activity"/>
    <property type="evidence" value="ECO:0000314"/>
    <property type="project" value="UniProtKB"/>
</dbReference>
<dbReference type="GO" id="GO:0006508">
    <property type="term" value="P:proteolysis"/>
    <property type="evidence" value="ECO:0000314"/>
    <property type="project" value="UniProtKB"/>
</dbReference>
<dbReference type="CDD" id="cd02248">
    <property type="entry name" value="Peptidase_C1A"/>
    <property type="match status" value="1"/>
</dbReference>
<dbReference type="FunFam" id="3.90.70.10:FF:000039">
    <property type="entry name" value="Cysteine proteinase 2, putative"/>
    <property type="match status" value="1"/>
</dbReference>
<dbReference type="Gene3D" id="3.90.70.10">
    <property type="entry name" value="Cysteine proteinases"/>
    <property type="match status" value="1"/>
</dbReference>
<dbReference type="InterPro" id="IPR038765">
    <property type="entry name" value="Papain-like_cys_pep_sf"/>
</dbReference>
<dbReference type="InterPro" id="IPR025661">
    <property type="entry name" value="Pept_asp_AS"/>
</dbReference>
<dbReference type="InterPro" id="IPR000169">
    <property type="entry name" value="Pept_cys_AS"/>
</dbReference>
<dbReference type="InterPro" id="IPR025660">
    <property type="entry name" value="Pept_his_AS"/>
</dbReference>
<dbReference type="InterPro" id="IPR013128">
    <property type="entry name" value="Peptidase_C1A"/>
</dbReference>
<dbReference type="InterPro" id="IPR000668">
    <property type="entry name" value="Peptidase_C1A_C"/>
</dbReference>
<dbReference type="InterPro" id="IPR039417">
    <property type="entry name" value="Peptidase_C1A_papain-like"/>
</dbReference>
<dbReference type="InterPro" id="IPR013201">
    <property type="entry name" value="Prot_inhib_I29"/>
</dbReference>
<dbReference type="PANTHER" id="PTHR12411">
    <property type="entry name" value="CYSTEINE PROTEASE FAMILY C1-RELATED"/>
    <property type="match status" value="1"/>
</dbReference>
<dbReference type="Pfam" id="PF08246">
    <property type="entry name" value="Inhibitor_I29"/>
    <property type="match status" value="1"/>
</dbReference>
<dbReference type="Pfam" id="PF00112">
    <property type="entry name" value="Peptidase_C1"/>
    <property type="match status" value="1"/>
</dbReference>
<dbReference type="PRINTS" id="PR00705">
    <property type="entry name" value="PAPAIN"/>
</dbReference>
<dbReference type="SMART" id="SM00848">
    <property type="entry name" value="Inhibitor_I29"/>
    <property type="match status" value="1"/>
</dbReference>
<dbReference type="SMART" id="SM00645">
    <property type="entry name" value="Pept_C1"/>
    <property type="match status" value="1"/>
</dbReference>
<dbReference type="SUPFAM" id="SSF54001">
    <property type="entry name" value="Cysteine proteinases"/>
    <property type="match status" value="1"/>
</dbReference>
<dbReference type="PROSITE" id="PS00640">
    <property type="entry name" value="THIOL_PROTEASE_ASN"/>
    <property type="match status" value="1"/>
</dbReference>
<dbReference type="PROSITE" id="PS00139">
    <property type="entry name" value="THIOL_PROTEASE_CYS"/>
    <property type="match status" value="1"/>
</dbReference>
<dbReference type="PROSITE" id="PS00639">
    <property type="entry name" value="THIOL_PROTEASE_HIS"/>
    <property type="match status" value="1"/>
</dbReference>
<comment type="function">
    <text evidence="7 8">Thiol protease. Probably involved in interaction with host tissues. Displays a similar activity to that of papain. Has high activity on Z-Phe-Arg-NHMec, but no activity on Z-Arg-NHMec.</text>
</comment>
<comment type="activity regulation">
    <text evidence="7">Strongly inhibited by Antipain, E64 and Leupeptin, and weakly inhibited by iodoacetic acid (IAA) and phenylmethylsulfonyl fluoride (PMSF). Requires the presence of dithiothreitol (DTT) for activity.</text>
</comment>
<comment type="biophysicochemical properties">
    <kinetics>
        <KM evidence="7">46 uM for Z-Phe-Arg-NHMec (at pH 7.45)</KM>
    </kinetics>
    <phDependence>
        <text evidence="7">Optimum pH is 7-9 in a mixed-buffer system. In a Tris buffer high levels of activity were detected at very alkaline pHs.</text>
    </phDependence>
</comment>
<comment type="subunit">
    <text evidence="7">Monomer.</text>
</comment>
<comment type="subcellular location">
    <subcellularLocation>
        <location evidence="7">Secreted</location>
    </subcellularLocation>
</comment>
<comment type="PTM">
    <text evidence="7">Contains cysteine residues involved in intramolecular disulfide bonding.</text>
</comment>
<comment type="similarity">
    <text evidence="4 5 6">Belongs to the peptidase C1 family.</text>
</comment>
<comment type="caution">
    <text evidence="9">It is not clear whether the mature peptide starts at Ala-107 or at Val-108.</text>
</comment>
<feature type="signal peptide" evidence="3">
    <location>
        <begin position="1"/>
        <end position="15"/>
    </location>
</feature>
<feature type="propeptide" id="PRO_0000042858" description="Activation peptide" evidence="3 7">
    <location>
        <begin position="16"/>
        <end position="106"/>
    </location>
</feature>
<feature type="chain" id="PRO_0000042859" description="Cathepsin L-like proteinase" evidence="7">
    <location>
        <begin position="107"/>
        <end position="326"/>
    </location>
</feature>
<feature type="active site" evidence="1">
    <location>
        <position position="132"/>
    </location>
</feature>
<feature type="active site" evidence="1">
    <location>
        <position position="269"/>
    </location>
</feature>
<feature type="active site" evidence="1">
    <location>
        <position position="289"/>
    </location>
</feature>
<feature type="modified residue" description="3-hydroxyproline; partial" evidence="7">
    <location>
        <position position="109"/>
    </location>
</feature>
<feature type="modified residue" description="3-hydroxyproline; partial" evidence="7">
    <location>
        <position position="196"/>
    </location>
</feature>
<feature type="disulfide bond" evidence="2">
    <location>
        <begin position="129"/>
        <end position="172"/>
    </location>
</feature>
<feature type="disulfide bond" evidence="2">
    <location>
        <begin position="163"/>
        <end position="204"/>
    </location>
</feature>
<feature type="disulfide bond" evidence="2">
    <location>
        <begin position="262"/>
        <end position="311"/>
    </location>
</feature>
<feature type="helix" evidence="11">
    <location>
        <begin position="18"/>
        <end position="28"/>
    </location>
</feature>
<feature type="helix" evidence="11">
    <location>
        <begin position="34"/>
        <end position="59"/>
    </location>
</feature>
<feature type="strand" evidence="11">
    <location>
        <begin position="62"/>
        <end position="67"/>
    </location>
</feature>
<feature type="turn" evidence="11">
    <location>
        <begin position="71"/>
        <end position="74"/>
    </location>
</feature>
<feature type="helix" evidence="11">
    <location>
        <begin position="77"/>
        <end position="84"/>
    </location>
</feature>
<feature type="helix" evidence="11">
    <location>
        <begin position="91"/>
        <end position="94"/>
    </location>
</feature>
<feature type="strand" evidence="11">
    <location>
        <begin position="97"/>
        <end position="100"/>
    </location>
</feature>
<feature type="helix" evidence="11">
    <location>
        <begin position="114"/>
        <end position="117"/>
    </location>
</feature>
<feature type="helix" evidence="11">
    <location>
        <begin position="132"/>
        <end position="149"/>
    </location>
</feature>
<feature type="helix" evidence="11">
    <location>
        <begin position="157"/>
        <end position="163"/>
    </location>
</feature>
<feature type="helix" evidence="11">
    <location>
        <begin position="165"/>
        <end position="167"/>
    </location>
</feature>
<feature type="helix" evidence="11">
    <location>
        <begin position="171"/>
        <end position="173"/>
    </location>
</feature>
<feature type="helix" evidence="11">
    <location>
        <begin position="177"/>
        <end position="184"/>
    </location>
</feature>
<feature type="turn" evidence="11">
    <location>
        <begin position="192"/>
        <end position="194"/>
    </location>
</feature>
<feature type="helix" evidence="11">
    <location>
        <begin position="208"/>
        <end position="210"/>
    </location>
</feature>
<feature type="strand" evidence="11">
    <location>
        <begin position="213"/>
        <end position="221"/>
    </location>
</feature>
<feature type="helix" evidence="11">
    <location>
        <begin position="226"/>
        <end position="236"/>
    </location>
</feature>
<feature type="strand" evidence="11">
    <location>
        <begin position="239"/>
        <end position="243"/>
    </location>
</feature>
<feature type="helix" evidence="11">
    <location>
        <begin position="247"/>
        <end position="250"/>
    </location>
</feature>
<feature type="strand" evidence="11">
    <location>
        <begin position="252"/>
        <end position="257"/>
    </location>
</feature>
<feature type="strand" evidence="11">
    <location>
        <begin position="269"/>
        <end position="279"/>
    </location>
</feature>
<feature type="strand" evidence="11">
    <location>
        <begin position="282"/>
        <end position="288"/>
    </location>
</feature>
<feature type="strand" evidence="11">
    <location>
        <begin position="300"/>
        <end position="304"/>
    </location>
</feature>
<feature type="strand" evidence="11">
    <location>
        <begin position="306"/>
        <end position="309"/>
    </location>
</feature>
<feature type="helix" evidence="11">
    <location>
        <begin position="310"/>
        <end position="312"/>
    </location>
</feature>
<feature type="turn" evidence="11">
    <location>
        <begin position="313"/>
        <end position="315"/>
    </location>
</feature>
<feature type="strand" evidence="11">
    <location>
        <begin position="316"/>
        <end position="324"/>
    </location>
</feature>
<accession>Q24940</accession>
<accession>P91727</accession>
<name>CATLL_FASHE</name>
<gene>
    <name evidence="8" type="primary">Cat-1</name>
</gene>
<reference evidence="9 10" key="1">
    <citation type="journal article" date="1994" name="Biochem. J.">
        <title>The secreted cathepsin L-like proteinases of the trematode Fasciola hepatica, contain 3-hydroxyproline residues.</title>
        <authorList>
            <person name="Wijffels G.L."/>
            <person name="Panaccio M."/>
            <person name="Salvatore L."/>
            <person name="Wilson L."/>
            <person name="Walker I.D."/>
            <person name="Spithill T.W."/>
        </authorList>
    </citation>
    <scope>NUCLEOTIDE SEQUENCE [MRNA]</scope>
    <scope>PROTEIN SEQUENCE OF 107-122; 188-206 AND 277-291</scope>
    <scope>FUNCTION</scope>
    <scope>CATALYTIC ACTIVITY</scope>
    <scope>ACTIVITY REGULATION</scope>
    <scope>BIOPHYSICOCHEMICAL PROPERTIES</scope>
    <scope>SUBUNIT</scope>
    <scope>SUBCELLULAR LOCATION</scope>
    <scope>HYDROXYLATION AT PRO-109 AND PRO-196</scope>
    <source>
        <strain evidence="10">Crompton</strain>
    </source>
</reference>
<keyword id="KW-0002">3D-structure</keyword>
<keyword id="KW-0903">Direct protein sequencing</keyword>
<keyword id="KW-1015">Disulfide bond</keyword>
<keyword id="KW-0378">Hydrolase</keyword>
<keyword id="KW-0379">Hydroxylation</keyword>
<keyword id="KW-0645">Protease</keyword>
<keyword id="KW-0964">Secreted</keyword>
<keyword id="KW-0732">Signal</keyword>
<keyword id="KW-0788">Thiol protease</keyword>
<keyword id="KW-0865">Zymogen</keyword>
<evidence type="ECO:0000250" key="1">
    <source>
        <dbReference type="UniProtKB" id="P07711"/>
    </source>
</evidence>
<evidence type="ECO:0000250" key="2">
    <source>
        <dbReference type="UniProtKB" id="P25774"/>
    </source>
</evidence>
<evidence type="ECO:0000255" key="3"/>
<evidence type="ECO:0000255" key="4">
    <source>
        <dbReference type="PROSITE-ProRule" id="PRU10088"/>
    </source>
</evidence>
<evidence type="ECO:0000255" key="5">
    <source>
        <dbReference type="PROSITE-ProRule" id="PRU10089"/>
    </source>
</evidence>
<evidence type="ECO:0000255" key="6">
    <source>
        <dbReference type="PROSITE-ProRule" id="PRU10090"/>
    </source>
</evidence>
<evidence type="ECO:0000269" key="7">
    <source>
    </source>
</evidence>
<evidence type="ECO:0000303" key="8">
    <source>
    </source>
</evidence>
<evidence type="ECO:0000305" key="9"/>
<evidence type="ECO:0000312" key="10">
    <source>
        <dbReference type="EMBL" id="AAA29136.1"/>
    </source>
</evidence>
<evidence type="ECO:0007829" key="11">
    <source>
        <dbReference type="PDB" id="2O6X"/>
    </source>
</evidence>
<protein>
    <recommendedName>
        <fullName>Cathepsin L-like proteinase</fullName>
        <ecNumber>3.4.22.-</ecNumber>
    </recommendedName>
</protein>